<protein>
    <recommendedName>
        <fullName evidence="1">Flagellar hook-basal body complex protein FliE</fullName>
    </recommendedName>
</protein>
<evidence type="ECO:0000255" key="1">
    <source>
        <dbReference type="HAMAP-Rule" id="MF_00724"/>
    </source>
</evidence>
<dbReference type="EMBL" id="CP000912">
    <property type="protein sequence ID" value="ABY39178.1"/>
    <property type="molecule type" value="Genomic_DNA"/>
</dbReference>
<dbReference type="RefSeq" id="WP_002966429.1">
    <property type="nucleotide sequence ID" value="NC_010167.1"/>
</dbReference>
<dbReference type="SMR" id="A9WXL2"/>
<dbReference type="KEGG" id="bmt:BSUIS_B0157"/>
<dbReference type="HOGENOM" id="CLU_147249_2_0_5"/>
<dbReference type="Proteomes" id="UP000008545">
    <property type="component" value="Chromosome II"/>
</dbReference>
<dbReference type="GO" id="GO:0009425">
    <property type="term" value="C:bacterial-type flagellum basal body"/>
    <property type="evidence" value="ECO:0007669"/>
    <property type="project" value="UniProtKB-SubCell"/>
</dbReference>
<dbReference type="GO" id="GO:0003774">
    <property type="term" value="F:cytoskeletal motor activity"/>
    <property type="evidence" value="ECO:0007669"/>
    <property type="project" value="InterPro"/>
</dbReference>
<dbReference type="GO" id="GO:0005198">
    <property type="term" value="F:structural molecule activity"/>
    <property type="evidence" value="ECO:0007669"/>
    <property type="project" value="InterPro"/>
</dbReference>
<dbReference type="GO" id="GO:0071973">
    <property type="term" value="P:bacterial-type flagellum-dependent cell motility"/>
    <property type="evidence" value="ECO:0007669"/>
    <property type="project" value="InterPro"/>
</dbReference>
<dbReference type="HAMAP" id="MF_00724">
    <property type="entry name" value="FliE"/>
    <property type="match status" value="1"/>
</dbReference>
<dbReference type="InterPro" id="IPR001624">
    <property type="entry name" value="FliE"/>
</dbReference>
<dbReference type="PANTHER" id="PTHR34653">
    <property type="match status" value="1"/>
</dbReference>
<dbReference type="PANTHER" id="PTHR34653:SF1">
    <property type="entry name" value="FLAGELLAR HOOK-BASAL BODY COMPLEX PROTEIN FLIE"/>
    <property type="match status" value="1"/>
</dbReference>
<dbReference type="Pfam" id="PF02049">
    <property type="entry name" value="FliE"/>
    <property type="match status" value="1"/>
</dbReference>
<dbReference type="PRINTS" id="PR01006">
    <property type="entry name" value="FLGHOOKFLIE"/>
</dbReference>
<comment type="subcellular location">
    <subcellularLocation>
        <location evidence="1">Bacterial flagellum basal body</location>
    </subcellularLocation>
</comment>
<comment type="similarity">
    <text evidence="1">Belongs to the FliE family.</text>
</comment>
<proteinExistence type="inferred from homology"/>
<feature type="chain" id="PRO_1000083311" description="Flagellar hook-basal body complex protein FliE">
    <location>
        <begin position="1"/>
        <end position="111"/>
    </location>
</feature>
<sequence length="111" mass="11510">MYDSIMSVSARNALSRLSETVAEKGVGSASAPQAVPAAPGASFGEVLSQMTGSVSQKLQAAEATSIQGIKGDAPVRDVVSSVMEAEQSLQTAIAIRDKIVQAYLEISRMPI</sequence>
<name>FLIE_BRUSI</name>
<accession>A9WXL2</accession>
<reference key="1">
    <citation type="submission" date="2007-12" db="EMBL/GenBank/DDBJ databases">
        <title>Brucella suis ATCC 23445 whole genome shotgun sequencing project.</title>
        <authorList>
            <person name="Setubal J.C."/>
            <person name="Bowns C."/>
            <person name="Boyle S."/>
            <person name="Crasta O.R."/>
            <person name="Czar M.J."/>
            <person name="Dharmanolla C."/>
            <person name="Gillespie J.J."/>
            <person name="Kenyon R.W."/>
            <person name="Lu J."/>
            <person name="Mane S."/>
            <person name="Mohapatra S."/>
            <person name="Nagrani S."/>
            <person name="Purkayastha A."/>
            <person name="Rajasimha H.K."/>
            <person name="Shallom J.M."/>
            <person name="Shallom S."/>
            <person name="Shukla M."/>
            <person name="Snyder E.E."/>
            <person name="Sobral B.W."/>
            <person name="Wattam A.R."/>
            <person name="Will R."/>
            <person name="Williams K."/>
            <person name="Yoo H."/>
            <person name="Bruce D."/>
            <person name="Detter C."/>
            <person name="Munk C."/>
            <person name="Brettin T.S."/>
        </authorList>
    </citation>
    <scope>NUCLEOTIDE SEQUENCE [LARGE SCALE GENOMIC DNA]</scope>
    <source>
        <strain>ATCC 23445 / NCTC 10510</strain>
    </source>
</reference>
<organism>
    <name type="scientific">Brucella suis (strain ATCC 23445 / NCTC 10510)</name>
    <dbReference type="NCBI Taxonomy" id="470137"/>
    <lineage>
        <taxon>Bacteria</taxon>
        <taxon>Pseudomonadati</taxon>
        <taxon>Pseudomonadota</taxon>
        <taxon>Alphaproteobacteria</taxon>
        <taxon>Hyphomicrobiales</taxon>
        <taxon>Brucellaceae</taxon>
        <taxon>Brucella/Ochrobactrum group</taxon>
        <taxon>Brucella</taxon>
    </lineage>
</organism>
<keyword id="KW-0975">Bacterial flagellum</keyword>
<gene>
    <name evidence="1" type="primary">fliE</name>
    <name type="ordered locus">BSUIS_B0157</name>
</gene>